<accession>C8ZIT1</accession>
<dbReference type="EMBL" id="FN394217">
    <property type="protein sequence ID" value="CAY86862.1"/>
    <property type="molecule type" value="Genomic_DNA"/>
</dbReference>
<dbReference type="SMR" id="C8ZIT1"/>
<dbReference type="HOGENOM" id="CLU_127263_0_0_1"/>
<dbReference type="OrthoDB" id="12522at4893"/>
<dbReference type="Proteomes" id="UP000000286">
    <property type="component" value="Chromosome XVI, Scaffold EC1118_1P2"/>
</dbReference>
<dbReference type="GO" id="GO:0005743">
    <property type="term" value="C:mitochondrial inner membrane"/>
    <property type="evidence" value="ECO:0007669"/>
    <property type="project" value="UniProtKB-SubCell"/>
</dbReference>
<protein>
    <recommendedName>
        <fullName evidence="1">Inner membrane assembly complex subunit 17</fullName>
    </recommendedName>
    <alternativeName>
        <fullName evidence="1">Altered inheritance of mitochondria protein 43</fullName>
    </alternativeName>
    <alternativeName>
        <fullName evidence="1">Found in mitochondrial proteome protein 14</fullName>
    </alternativeName>
</protein>
<comment type="function">
    <text evidence="1">Component of the INA complex (INAC) that promotes the biogenesis of mitochondrial F(1)F(0)-ATP synthase. INAC facilitates the assembly of the peripheral stalk and promotes the assembly of the catalytic F(1)-domain with the membrane-embedded F(0)-domain.</text>
</comment>
<comment type="subunit">
    <text evidence="1">Component of the inner membrane assembly (INA) complex, composed of INA17 and INA22. Interacts with a subset of F(1)F(0)-ATP synthase subunits of the F(1)-domain and the peripheral stalk.</text>
</comment>
<comment type="subcellular location">
    <subcellularLocation>
        <location evidence="1">Mitochondrion inner membrane</location>
        <topology evidence="2">Single-pass membrane protein</topology>
    </subcellularLocation>
</comment>
<comment type="similarity">
    <text evidence="3">Belongs to the INA17 family.</text>
</comment>
<reference key="1">
    <citation type="journal article" date="2009" name="Proc. Natl. Acad. Sci. U.S.A.">
        <title>Eukaryote-to-eukaryote gene transfer events revealed by the genome sequence of the wine yeast Saccharomyces cerevisiae EC1118.</title>
        <authorList>
            <person name="Novo M."/>
            <person name="Bigey F."/>
            <person name="Beyne E."/>
            <person name="Galeote V."/>
            <person name="Gavory F."/>
            <person name="Mallet S."/>
            <person name="Cambon B."/>
            <person name="Legras J.-L."/>
            <person name="Wincker P."/>
            <person name="Casaregola S."/>
            <person name="Dequin S."/>
        </authorList>
    </citation>
    <scope>NUCLEOTIDE SEQUENCE [LARGE SCALE GENOMIC DNA]</scope>
    <source>
        <strain>Lalvin EC1118 / Prise de mousse</strain>
    </source>
</reference>
<sequence>MLKRRSNALITLSRTKLFPITTVAYYHRRLLNQQRRAVSTSPKKEIKSLEDLANLDSLDGVDTELIRDLINEHTTKLNIKKELDMLKKFSQEEESGHEIPVKRFIRPLWMFILMGSSVYLLLHFSWWKLEHEERESQLKKEVEILEHQLNELIVQDKTHNTSRGKGSNESTHMKPWYRRWFW</sequence>
<feature type="transit peptide" description="Mitochondrion" evidence="2">
    <location>
        <begin position="1"/>
        <end position="45"/>
    </location>
</feature>
<feature type="chain" id="PRO_0000399886" description="Inner membrane assembly complex subunit 17" evidence="2">
    <location>
        <begin position="46"/>
        <end position="182"/>
    </location>
</feature>
<feature type="topological domain" description="Mitochondrial matrix" evidence="1">
    <location>
        <begin position="46"/>
        <end position="107"/>
    </location>
</feature>
<feature type="transmembrane region" description="Helical" evidence="2">
    <location>
        <begin position="108"/>
        <end position="127"/>
    </location>
</feature>
<feature type="topological domain" description="Mitochondrial intermembrane" evidence="1">
    <location>
        <begin position="128"/>
        <end position="182"/>
    </location>
</feature>
<feature type="coiled-coil region" evidence="2">
    <location>
        <begin position="128"/>
        <end position="158"/>
    </location>
</feature>
<name>INA17_YEAS8</name>
<proteinExistence type="inferred from homology"/>
<keyword id="KW-0143">Chaperone</keyword>
<keyword id="KW-0175">Coiled coil</keyword>
<keyword id="KW-0472">Membrane</keyword>
<keyword id="KW-0496">Mitochondrion</keyword>
<keyword id="KW-0999">Mitochondrion inner membrane</keyword>
<keyword id="KW-0809">Transit peptide</keyword>
<keyword id="KW-0812">Transmembrane</keyword>
<keyword id="KW-1133">Transmembrane helix</keyword>
<evidence type="ECO:0000250" key="1">
    <source>
        <dbReference type="UniProtKB" id="Q02888"/>
    </source>
</evidence>
<evidence type="ECO:0000255" key="2"/>
<evidence type="ECO:0000305" key="3"/>
<organism>
    <name type="scientific">Saccharomyces cerevisiae (strain Lalvin EC1118 / Prise de mousse)</name>
    <name type="common">Baker's yeast</name>
    <dbReference type="NCBI Taxonomy" id="643680"/>
    <lineage>
        <taxon>Eukaryota</taxon>
        <taxon>Fungi</taxon>
        <taxon>Dikarya</taxon>
        <taxon>Ascomycota</taxon>
        <taxon>Saccharomycotina</taxon>
        <taxon>Saccharomycetes</taxon>
        <taxon>Saccharomycetales</taxon>
        <taxon>Saccharomycetaceae</taxon>
        <taxon>Saccharomyces</taxon>
    </lineage>
</organism>
<gene>
    <name evidence="1" type="primary">INA17</name>
    <name evidence="1" type="synonym">AIM43</name>
    <name evidence="1" type="synonym">FMP14</name>
    <name type="ORF">EC1118_1P2_2003g</name>
</gene>